<feature type="chain" id="PRO_0000085334" description="Virion infectivity factor">
    <location>
        <begin position="1"/>
        <end position="214"/>
    </location>
</feature>
<feature type="region of interest" description="Multimerization" evidence="1">
    <location>
        <begin position="154"/>
        <end position="166"/>
    </location>
</feature>
<feature type="short sequence motif" description="HCCH motif" evidence="1">
    <location>
        <begin position="110"/>
        <end position="141"/>
    </location>
</feature>
<feature type="short sequence motif" description="BC-box-like motif" evidence="1">
    <location>
        <begin position="147"/>
        <end position="156"/>
    </location>
</feature>
<feature type="modified residue" description="Phosphothreonine; by host" evidence="1">
    <location>
        <position position="98"/>
    </location>
</feature>
<feature type="modified residue" description="Phosphoserine; by host" evidence="1">
    <location>
        <position position="147"/>
    </location>
</feature>
<protein>
    <recommendedName>
        <fullName>Virion infectivity factor</fullName>
        <shortName>Vif</shortName>
    </recommendedName>
    <alternativeName>
        <fullName>Q protein</fullName>
    </alternativeName>
    <alternativeName>
        <fullName>SOR protein</fullName>
    </alternativeName>
</protein>
<proteinExistence type="evidence at transcript level"/>
<evidence type="ECO:0000250" key="1"/>
<evidence type="ECO:0000305" key="2"/>
<gene>
    <name type="primary">vif</name>
</gene>
<organism>
    <name type="scientific">Simian immunodeficiency virus (isolate PBj14/BCL-3)</name>
    <name type="common">SIV-sm</name>
    <name type="synonym">Simian immunodeficiency virus sooty mangabey monkey</name>
    <dbReference type="NCBI Taxonomy" id="11738"/>
    <lineage>
        <taxon>Viruses</taxon>
        <taxon>Riboviria</taxon>
        <taxon>Pararnavirae</taxon>
        <taxon>Artverviricota</taxon>
        <taxon>Revtraviricetes</taxon>
        <taxon>Ortervirales</taxon>
        <taxon>Retroviridae</taxon>
        <taxon>Orthoretrovirinae</taxon>
        <taxon>Lentivirus</taxon>
        <taxon>Simian immunodeficiency virus</taxon>
    </lineage>
</organism>
<dbReference type="EMBL" id="L03298">
    <property type="protein sequence ID" value="AAA47778.1"/>
    <property type="molecule type" value="Genomic_RNA"/>
</dbReference>
<dbReference type="EMBL" id="M31325">
    <property type="protein sequence ID" value="AAA47754.1"/>
    <property type="molecule type" value="Genomic_RNA"/>
</dbReference>
<dbReference type="SMR" id="P19506"/>
<dbReference type="Proteomes" id="UP000007221">
    <property type="component" value="Segment"/>
</dbReference>
<dbReference type="GO" id="GO:0030430">
    <property type="term" value="C:host cell cytoplasm"/>
    <property type="evidence" value="ECO:0007669"/>
    <property type="project" value="UniProtKB-SubCell"/>
</dbReference>
<dbReference type="GO" id="GO:0020002">
    <property type="term" value="C:host cell plasma membrane"/>
    <property type="evidence" value="ECO:0007669"/>
    <property type="project" value="UniProtKB-SubCell"/>
</dbReference>
<dbReference type="GO" id="GO:0016020">
    <property type="term" value="C:membrane"/>
    <property type="evidence" value="ECO:0007669"/>
    <property type="project" value="UniProtKB-KW"/>
</dbReference>
<dbReference type="GO" id="GO:0044423">
    <property type="term" value="C:virion component"/>
    <property type="evidence" value="ECO:0007669"/>
    <property type="project" value="UniProtKB-KW"/>
</dbReference>
<dbReference type="GO" id="GO:0019058">
    <property type="term" value="P:viral life cycle"/>
    <property type="evidence" value="ECO:0007669"/>
    <property type="project" value="InterPro"/>
</dbReference>
<dbReference type="InterPro" id="IPR000475">
    <property type="entry name" value="Vif"/>
</dbReference>
<dbReference type="Pfam" id="PF00559">
    <property type="entry name" value="Vif"/>
    <property type="match status" value="1"/>
</dbReference>
<dbReference type="PRINTS" id="PR00349">
    <property type="entry name" value="VIRIONINFFCT"/>
</dbReference>
<keyword id="KW-1032">Host cell membrane</keyword>
<keyword id="KW-1035">Host cytoplasm</keyword>
<keyword id="KW-1043">Host membrane</keyword>
<keyword id="KW-0945">Host-virus interaction</keyword>
<keyword id="KW-0472">Membrane</keyword>
<keyword id="KW-0597">Phosphoprotein</keyword>
<keyword id="KW-0832">Ubl conjugation</keyword>
<keyword id="KW-0833">Ubl conjugation pathway</keyword>
<keyword id="KW-0946">Virion</keyword>
<accession>P19506</accession>
<comment type="function">
    <text evidence="1">Counteracts the innate antiviral activity of APOBEC3G. Forms a complex with host APOBEC3G thus preventing the entry of this lethally hypermutating enzyme into progeny virions. Functions as an adapter molecule, recruiting APOBEC3G to the ubiquitin-proteasome machinery. Targets APOBEC3G for degradation through the assembly with elongin BC complex, CUL5 and RBX1. Binds viral RNA and affects the stability of viral nucleoprotein core. May play a role in viral morphology (By similarity).</text>
</comment>
<comment type="subunit">
    <text evidence="1">Homomultimer; in vitro and presumably in vivo. Interacts with viral Pr55Gag precursor and host APOBEC3G. The interaction between Vif and APOBEC3G is species-specific, which may play a role in restricting the replication of SIV to their host. Forms an E3 ligase complex by interacting with host CUL5 and elongin BC complex (ELOB and ELOC) (By similarity).</text>
</comment>
<comment type="subcellular location">
    <subcellularLocation>
        <location evidence="1">Host cytoplasm</location>
    </subcellularLocation>
    <subcellularLocation>
        <location evidence="1">Host cell membrane</location>
        <topology evidence="1">Peripheral membrane protein</topology>
        <orientation evidence="1">Cytoplasmic side</orientation>
    </subcellularLocation>
    <subcellularLocation>
        <location evidence="1">Virion</location>
    </subcellularLocation>
    <text evidence="1">Seems to colocalize with intermediate filament vimentin. A fraction is associated with the cytoplasmic side of cellular membranes, presumably via the interaction with Pr55Gag precursor (By similarity).</text>
</comment>
<comment type="induction">
    <text>Expressed late during infection in a Rev-dependent manner.</text>
</comment>
<comment type="domain">
    <text evidence="1">The BC-like-box motif mediates the interaction with elongin BC complex.</text>
</comment>
<comment type="domain">
    <text evidence="1">The HCCH motif (H-x(5)-C-x(18)-C-x(5)-H) mediates the interaction with CUL5.</text>
</comment>
<comment type="PTM">
    <text evidence="1">Processed in virion by the viral protease.</text>
</comment>
<comment type="PTM">
    <text evidence="1">Highly phosphorylated on serine and threonine residues.</text>
</comment>
<comment type="PTM">
    <text evidence="1">Polyubiquitinated and degraded by the proteasome in the presence of APOBEC3G.</text>
</comment>
<comment type="miscellaneous">
    <text>Vif-defective viruses show catastrophic failure in reverse transcription due to APOBEC-induced mutations that initiate a DNA base repair pathway and compromise the structural integrity of the ssDNA. In the absence of Vif, the virion is morphologically abnormal.</text>
</comment>
<comment type="similarity">
    <text evidence="2">Belongs to the primate lentivirus group Vif protein family.</text>
</comment>
<reference key="1">
    <citation type="journal article" date="1990" name="Nature">
        <title>Sequence analysis and acute pathogenicity of molecularly cloned SIVSMM-PBj14.</title>
        <authorList>
            <person name="Dewhurst S."/>
            <person name="Embretson J.E."/>
            <person name="Anderson D.C."/>
            <person name="Mullins J.I."/>
            <person name="Fultz P.N."/>
        </authorList>
    </citation>
    <scope>NUCLEOTIDE SEQUENCE [GENOMIC RNA]</scope>
</reference>
<reference key="2">
    <citation type="journal article" date="1992" name="AIDS Res. Hum. Retroviruses">
        <title>Molecular clones from a non-acutely pathogenic derivative of SIVsmmPBj14: characterization and comparison to acutely pathogenic clones.</title>
        <authorList>
            <person name="Dewhurst S."/>
            <person name="Embretson J.E."/>
            <person name="Fultz P.N."/>
            <person name="Mullins J.I."/>
        </authorList>
    </citation>
    <scope>NUCLEOTIDE SEQUENCE [GENOMIC RNA]</scope>
</reference>
<name>VIF_SIVSP</name>
<sequence length="214" mass="25125">MEEEKNWIVVPTWRIPGRLEKWHSLIKHLKYNTKDLQKACYVPHHKVGWAWWTCSRVIFPLKDEAHLEVQGYWNLTPEKGWLSTYAVRITWYSRNFWTDVTPDYADTLLHGTYFPCFSEGEVRRAIRGEKLLSCCKFPKAHKNQVPSLQYLALTVVSHVRSQGENPTWKQWRRNNRRGLRLARQNSRRNKQGSSESFAEGTNFPGLAKVLGILA</sequence>
<organismHost>
    <name type="scientific">Cercopithecidae</name>
    <name type="common">Old World monkeys</name>
    <dbReference type="NCBI Taxonomy" id="9527"/>
</organismHost>